<name>RL22_CLYEP</name>
<sequence>MNVKAIANQXSVAPRKTRLVADLIRGKHVREAQAILMFTPKAASPIVSKLLKSAVANAVHNFSLKEEELYVKEIFVNEGLRLTRLLPRAKG</sequence>
<feature type="chain" id="PRO_0000125146" description="Large ribosomal subunit protein uL22">
    <location>
        <begin position="1"/>
        <end position="91" status="greater than"/>
    </location>
</feature>
<feature type="non-terminal residue">
    <location>
        <position position="91"/>
    </location>
</feature>
<protein>
    <recommendedName>
        <fullName evidence="2">Large ribosomal subunit protein uL22</fullName>
    </recommendedName>
    <alternativeName>
        <fullName>50S ribosomal protein L22</fullName>
    </alternativeName>
</protein>
<organism>
    <name type="scientific">Clover yellow edge phytoplasma</name>
    <dbReference type="NCBI Taxonomy" id="35775"/>
    <lineage>
        <taxon>Bacteria</taxon>
        <taxon>Bacillati</taxon>
        <taxon>Mycoplasmatota</taxon>
        <taxon>Mollicutes</taxon>
        <taxon>Acholeplasmatales</taxon>
        <taxon>Acholeplasmataceae</taxon>
        <taxon>Candidatus Phytoplasma</taxon>
        <taxon>16SrIII (X-disease group)</taxon>
    </lineage>
</organism>
<keyword id="KW-0687">Ribonucleoprotein</keyword>
<keyword id="KW-0689">Ribosomal protein</keyword>
<keyword id="KW-0694">RNA-binding</keyword>
<keyword id="KW-0699">rRNA-binding</keyword>
<comment type="function">
    <text evidence="1">This protein binds specifically to 23S rRNA; its binding is stimulated by other ribosomal proteins, e.g. L4, L17, and L20. It is important during the early stages of 50S assembly. It makes multiple contacts with different domains of the 23S rRNA in the assembled 50S subunit and ribosome (By similarity).</text>
</comment>
<comment type="function">
    <text evidence="1">The globular domain of the protein is located near the polypeptide exit tunnel on the outside of the subunit, while an extended beta-hairpin is found that lines the wall of the exit tunnel in the center of the 70S ribosome.</text>
</comment>
<comment type="subunit">
    <text evidence="1">Part of the 50S ribosomal subunit.</text>
</comment>
<comment type="similarity">
    <text evidence="2">Belongs to the universal ribosomal protein uL22 family.</text>
</comment>
<dbReference type="EMBL" id="L27019">
    <property type="protein sequence ID" value="AAA83941.1"/>
    <property type="molecule type" value="Genomic_DNA"/>
</dbReference>
<dbReference type="GO" id="GO:0022625">
    <property type="term" value="C:cytosolic large ribosomal subunit"/>
    <property type="evidence" value="ECO:0007669"/>
    <property type="project" value="TreeGrafter"/>
</dbReference>
<dbReference type="GO" id="GO:0019843">
    <property type="term" value="F:rRNA binding"/>
    <property type="evidence" value="ECO:0007669"/>
    <property type="project" value="UniProtKB-KW"/>
</dbReference>
<dbReference type="GO" id="GO:0003735">
    <property type="term" value="F:structural constituent of ribosome"/>
    <property type="evidence" value="ECO:0007669"/>
    <property type="project" value="InterPro"/>
</dbReference>
<dbReference type="GO" id="GO:0006412">
    <property type="term" value="P:translation"/>
    <property type="evidence" value="ECO:0007669"/>
    <property type="project" value="InterPro"/>
</dbReference>
<dbReference type="CDD" id="cd00336">
    <property type="entry name" value="Ribosomal_L22"/>
    <property type="match status" value="1"/>
</dbReference>
<dbReference type="Gene3D" id="3.90.470.10">
    <property type="entry name" value="Ribosomal protein L22/L17"/>
    <property type="match status" value="1"/>
</dbReference>
<dbReference type="InterPro" id="IPR001063">
    <property type="entry name" value="Ribosomal_uL22"/>
</dbReference>
<dbReference type="InterPro" id="IPR005727">
    <property type="entry name" value="Ribosomal_uL22_bac/chlpt-type"/>
</dbReference>
<dbReference type="InterPro" id="IPR047867">
    <property type="entry name" value="Ribosomal_uL22_bac/org-type"/>
</dbReference>
<dbReference type="InterPro" id="IPR036394">
    <property type="entry name" value="Ribosomal_uL22_sf"/>
</dbReference>
<dbReference type="NCBIfam" id="TIGR01044">
    <property type="entry name" value="rplV_bact"/>
    <property type="match status" value="1"/>
</dbReference>
<dbReference type="PANTHER" id="PTHR13501">
    <property type="entry name" value="CHLOROPLAST 50S RIBOSOMAL PROTEIN L22-RELATED"/>
    <property type="match status" value="1"/>
</dbReference>
<dbReference type="PANTHER" id="PTHR13501:SF8">
    <property type="entry name" value="LARGE RIBOSOMAL SUBUNIT PROTEIN UL22M"/>
    <property type="match status" value="1"/>
</dbReference>
<dbReference type="Pfam" id="PF00237">
    <property type="entry name" value="Ribosomal_L22"/>
    <property type="match status" value="1"/>
</dbReference>
<dbReference type="SUPFAM" id="SSF54843">
    <property type="entry name" value="Ribosomal protein L22"/>
    <property type="match status" value="1"/>
</dbReference>
<gene>
    <name type="primary">rplV</name>
    <name type="synonym">rpl22</name>
</gene>
<reference key="1">
    <citation type="journal article" date="1994" name="J. Bacteriol.">
        <title>Phylogeny of mycoplasmalike organisms (phytoplasmas): a basis for their classification.</title>
        <authorList>
            <person name="Gundersen D.E."/>
            <person name="Lee I.M."/>
            <person name="Rehner S.A."/>
            <person name="Davis R.E."/>
            <person name="Kingsbury D.T."/>
        </authorList>
    </citation>
    <scope>NUCLEOTIDE SEQUENCE [GENOMIC DNA]</scope>
</reference>
<proteinExistence type="inferred from homology"/>
<evidence type="ECO:0000250" key="1"/>
<evidence type="ECO:0000305" key="2"/>
<accession>Q46491</accession>